<dbReference type="EMBL" id="CU928145">
    <property type="protein sequence ID" value="CAV00648.1"/>
    <property type="molecule type" value="Genomic_DNA"/>
</dbReference>
<dbReference type="RefSeq" id="WP_000818601.1">
    <property type="nucleotide sequence ID" value="NC_011748.1"/>
</dbReference>
<dbReference type="SMR" id="B7L761"/>
<dbReference type="GeneID" id="93778356"/>
<dbReference type="KEGG" id="eck:EC55989_4106"/>
<dbReference type="HOGENOM" id="CLU_069356_5_0_6"/>
<dbReference type="Proteomes" id="UP000000746">
    <property type="component" value="Chromosome"/>
</dbReference>
<dbReference type="GO" id="GO:0043590">
    <property type="term" value="C:bacterial nucleoid"/>
    <property type="evidence" value="ECO:0007669"/>
    <property type="project" value="UniProtKB-UniRule"/>
</dbReference>
<dbReference type="GO" id="GO:0005737">
    <property type="term" value="C:cytoplasm"/>
    <property type="evidence" value="ECO:0007669"/>
    <property type="project" value="UniProtKB-UniRule"/>
</dbReference>
<dbReference type="GO" id="GO:0003700">
    <property type="term" value="F:DNA-binding transcription factor activity"/>
    <property type="evidence" value="ECO:0007669"/>
    <property type="project" value="TreeGrafter"/>
</dbReference>
<dbReference type="GO" id="GO:0000976">
    <property type="term" value="F:transcription cis-regulatory region binding"/>
    <property type="evidence" value="ECO:0007669"/>
    <property type="project" value="TreeGrafter"/>
</dbReference>
<dbReference type="GO" id="GO:0051301">
    <property type="term" value="P:cell division"/>
    <property type="evidence" value="ECO:0007669"/>
    <property type="project" value="UniProtKB-KW"/>
</dbReference>
<dbReference type="GO" id="GO:0010974">
    <property type="term" value="P:negative regulation of division septum assembly"/>
    <property type="evidence" value="ECO:0007669"/>
    <property type="project" value="InterPro"/>
</dbReference>
<dbReference type="FunFam" id="1.10.357.10:FF:000002">
    <property type="entry name" value="Nucleoid occlusion factor SlmA"/>
    <property type="match status" value="1"/>
</dbReference>
<dbReference type="Gene3D" id="1.10.357.10">
    <property type="entry name" value="Tetracycline Repressor, domain 2"/>
    <property type="match status" value="1"/>
</dbReference>
<dbReference type="HAMAP" id="MF_01839">
    <property type="entry name" value="NO_factor_SlmA"/>
    <property type="match status" value="1"/>
</dbReference>
<dbReference type="InterPro" id="IPR023772">
    <property type="entry name" value="DNA-bd_HTH_TetR-type_CS"/>
</dbReference>
<dbReference type="InterPro" id="IPR009057">
    <property type="entry name" value="Homeodomain-like_sf"/>
</dbReference>
<dbReference type="InterPro" id="IPR050109">
    <property type="entry name" value="HTH-type_TetR-like_transc_reg"/>
</dbReference>
<dbReference type="InterPro" id="IPR001647">
    <property type="entry name" value="HTH_TetR"/>
</dbReference>
<dbReference type="InterPro" id="IPR023769">
    <property type="entry name" value="NO_SlmA"/>
</dbReference>
<dbReference type="InterPro" id="IPR054580">
    <property type="entry name" value="SlmA-like_C"/>
</dbReference>
<dbReference type="InterPro" id="IPR036271">
    <property type="entry name" value="Tet_transcr_reg_TetR-rel_C_sf"/>
</dbReference>
<dbReference type="NCBIfam" id="NF007015">
    <property type="entry name" value="PRK09480.1"/>
    <property type="match status" value="1"/>
</dbReference>
<dbReference type="PANTHER" id="PTHR30055">
    <property type="entry name" value="HTH-TYPE TRANSCRIPTIONAL REGULATOR RUTR"/>
    <property type="match status" value="1"/>
</dbReference>
<dbReference type="PANTHER" id="PTHR30055:SF183">
    <property type="entry name" value="NUCLEOID OCCLUSION FACTOR SLMA"/>
    <property type="match status" value="1"/>
</dbReference>
<dbReference type="Pfam" id="PF22276">
    <property type="entry name" value="SlmA-like_C"/>
    <property type="match status" value="1"/>
</dbReference>
<dbReference type="Pfam" id="PF00440">
    <property type="entry name" value="TetR_N"/>
    <property type="match status" value="1"/>
</dbReference>
<dbReference type="SUPFAM" id="SSF46689">
    <property type="entry name" value="Homeodomain-like"/>
    <property type="match status" value="1"/>
</dbReference>
<dbReference type="SUPFAM" id="SSF48498">
    <property type="entry name" value="Tetracyclin repressor-like, C-terminal domain"/>
    <property type="match status" value="1"/>
</dbReference>
<dbReference type="PROSITE" id="PS01081">
    <property type="entry name" value="HTH_TETR_1"/>
    <property type="match status" value="1"/>
</dbReference>
<dbReference type="PROSITE" id="PS50977">
    <property type="entry name" value="HTH_TETR_2"/>
    <property type="match status" value="1"/>
</dbReference>
<comment type="function">
    <text evidence="1">Required for nucleoid occlusion (NO) phenomenon, which prevents Z-ring formation and cell division over the nucleoid. Acts as a DNA-associated cell division inhibitor that binds simultaneously chromosomal DNA and FtsZ, and disrupts the assembly of FtsZ polymers. SlmA-DNA-binding sequences (SBS) are dispersed on non-Ter regions of the chromosome, preventing FtsZ polymerization at these regions.</text>
</comment>
<comment type="subunit">
    <text evidence="1">Homodimer. Interacts with FtsZ.</text>
</comment>
<comment type="subcellular location">
    <subcellularLocation>
        <location evidence="1">Cytoplasm</location>
        <location evidence="1">Nucleoid</location>
    </subcellularLocation>
</comment>
<comment type="similarity">
    <text evidence="1">Belongs to the nucleoid occlusion factor SlmA family.</text>
</comment>
<proteinExistence type="inferred from homology"/>
<keyword id="KW-0131">Cell cycle</keyword>
<keyword id="KW-0132">Cell division</keyword>
<keyword id="KW-0175">Coiled coil</keyword>
<keyword id="KW-0963">Cytoplasm</keyword>
<keyword id="KW-0238">DNA-binding</keyword>
<keyword id="KW-1185">Reference proteome</keyword>
<accession>B7L761</accession>
<reference key="1">
    <citation type="journal article" date="2009" name="PLoS Genet.">
        <title>Organised genome dynamics in the Escherichia coli species results in highly diverse adaptive paths.</title>
        <authorList>
            <person name="Touchon M."/>
            <person name="Hoede C."/>
            <person name="Tenaillon O."/>
            <person name="Barbe V."/>
            <person name="Baeriswyl S."/>
            <person name="Bidet P."/>
            <person name="Bingen E."/>
            <person name="Bonacorsi S."/>
            <person name="Bouchier C."/>
            <person name="Bouvet O."/>
            <person name="Calteau A."/>
            <person name="Chiapello H."/>
            <person name="Clermont O."/>
            <person name="Cruveiller S."/>
            <person name="Danchin A."/>
            <person name="Diard M."/>
            <person name="Dossat C."/>
            <person name="Karoui M.E."/>
            <person name="Frapy E."/>
            <person name="Garry L."/>
            <person name="Ghigo J.M."/>
            <person name="Gilles A.M."/>
            <person name="Johnson J."/>
            <person name="Le Bouguenec C."/>
            <person name="Lescat M."/>
            <person name="Mangenot S."/>
            <person name="Martinez-Jehanne V."/>
            <person name="Matic I."/>
            <person name="Nassif X."/>
            <person name="Oztas S."/>
            <person name="Petit M.A."/>
            <person name="Pichon C."/>
            <person name="Rouy Z."/>
            <person name="Ruf C.S."/>
            <person name="Schneider D."/>
            <person name="Tourret J."/>
            <person name="Vacherie B."/>
            <person name="Vallenet D."/>
            <person name="Medigue C."/>
            <person name="Rocha E.P.C."/>
            <person name="Denamur E."/>
        </authorList>
    </citation>
    <scope>NUCLEOTIDE SEQUENCE [LARGE SCALE GENOMIC DNA]</scope>
    <source>
        <strain>55989 / EAEC</strain>
    </source>
</reference>
<sequence length="198" mass="22836">MAEKQTAKRNRREEILQSLALMLESSDGSQRITTAKLAASVGVSEAALYRHFPSKTRMFDSLIEFIEDSLITRINLILKDEKDTTARLRLIVLLLLGFGERNPGLTRILTGHALMFEQDRLQGRINQLFERIEAQLRQVLREKRMREGEGYTTDETLLASQILAFCEGMLSRFVRSEFKYRPTDDFDARWPLIAAQLQ</sequence>
<evidence type="ECO:0000255" key="1">
    <source>
        <dbReference type="HAMAP-Rule" id="MF_01839"/>
    </source>
</evidence>
<gene>
    <name evidence="1" type="primary">slmA</name>
    <name type="ordered locus">EC55989_4106</name>
</gene>
<organism>
    <name type="scientific">Escherichia coli (strain 55989 / EAEC)</name>
    <dbReference type="NCBI Taxonomy" id="585055"/>
    <lineage>
        <taxon>Bacteria</taxon>
        <taxon>Pseudomonadati</taxon>
        <taxon>Pseudomonadota</taxon>
        <taxon>Gammaproteobacteria</taxon>
        <taxon>Enterobacterales</taxon>
        <taxon>Enterobacteriaceae</taxon>
        <taxon>Escherichia</taxon>
    </lineage>
</organism>
<name>SLMA_ECO55</name>
<feature type="chain" id="PRO_1000188380" description="Nucleoid occlusion factor SlmA">
    <location>
        <begin position="1"/>
        <end position="198"/>
    </location>
</feature>
<feature type="domain" description="HTH tetR-type" evidence="1">
    <location>
        <begin position="10"/>
        <end position="70"/>
    </location>
</feature>
<feature type="DNA-binding region" description="H-T-H motif" evidence="1">
    <location>
        <begin position="33"/>
        <end position="52"/>
    </location>
</feature>
<feature type="coiled-coil region" evidence="1">
    <location>
        <begin position="117"/>
        <end position="144"/>
    </location>
</feature>
<protein>
    <recommendedName>
        <fullName evidence="1">Nucleoid occlusion factor SlmA</fullName>
    </recommendedName>
</protein>